<keyword id="KW-1003">Cell membrane</keyword>
<keyword id="KW-0134">Cell wall</keyword>
<keyword id="KW-0325">Glycoprotein</keyword>
<keyword id="KW-0449">Lipoprotein</keyword>
<keyword id="KW-0472">Membrane</keyword>
<keyword id="KW-0564">Palmitate</keyword>
<keyword id="KW-1185">Reference proteome</keyword>
<keyword id="KW-0964">Secreted</keyword>
<keyword id="KW-0732">Signal</keyword>
<name>MP83_MYCTU</name>
<accession>P9WNF3</accession>
<accession>L0TAW5</accession>
<accession>P0A670</accession>
<accession>P71493</accession>
<accession>Q10790</accession>
<proteinExistence type="evidence at protein level"/>
<gene>
    <name type="primary">mpt83</name>
    <name type="ordered locus">Rv2873</name>
    <name type="ORF">MTCY274.04</name>
</gene>
<comment type="function">
    <text evidence="4 5">Recombinant, non-modified protein stimulates secretion of cytokines (TNF-alpha, IL-6 and IL-12p40) by mouse macrophage cell lines in a TLR2-dependent fashion, which leads to increased host innate immunity responses against the bacterium (PubMed:22174456). Serves as a strong human and mouse antigen T cell antigen during M.tuberculosis infection, inducing strong IFN-gamma expression (PubMed:22567094).</text>
</comment>
<comment type="subunit">
    <text evidence="4">Interacts with host TLR2 (tested in mouse) (PubMed:22174456).</text>
</comment>
<comment type="subcellular location">
    <subcellularLocation>
        <location evidence="3 7 8">Cell membrane</location>
        <topology evidence="3">Lipid-anchor</topology>
    </subcellularLocation>
    <subcellularLocation>
        <location evidence="7">Secreted</location>
        <location evidence="7">Cell wall</location>
    </subcellularLocation>
    <subcellularLocation>
        <location evidence="1">Secreted</location>
    </subcellularLocation>
</comment>
<comment type="induction">
    <text evidence="6">Highly expressed and immunogenic during infection of mice with live bacteria (at protein level).</text>
</comment>
<comment type="PTM">
    <text evidence="1">O-glycosylated. Contains 0-3 mannose residues attached to residues 48-49 in various configurations; the dominant glycoform is Thr-48(Man)/Thr-49(Man2) with an unusual Man(1-&gt;3)Man linkage, but Thr48(Man3)/Thr49(Man0) through to Thr48(Man0/)Thr49(Man3) are also seen (By similarity).</text>
</comment>
<comment type="biotechnology">
    <text evidence="5">Could be used in vaccine production; both recombinant protein and DNA vaccines stimulate antigen-specific T cell responses in mice (PubMed:22567094).</text>
</comment>
<reference key="1">
    <citation type="journal article" date="1996" name="Scand. J. Immunol.">
        <title>Molecular characterization of MPT83: a seroreactive antigen of Mycobacterium tuberculosis with homology to MPT70.</title>
        <authorList>
            <person name="Hewinson R.G."/>
            <person name="Michell S."/>
            <person name="Russell W.P."/>
            <person name="McAdam R.A."/>
            <person name="Jacobs W.R. Jr."/>
        </authorList>
    </citation>
    <scope>NUCLEOTIDE SEQUENCE [GENOMIC DNA]</scope>
    <scope>SUBCELLULAR LOCATION</scope>
    <scope>INDUCTION</scope>
    <source>
        <strain>ATCC 25618 / H37Rv</strain>
    </source>
</reference>
<reference key="2">
    <citation type="journal article" date="1998" name="Nature">
        <title>Deciphering the biology of Mycobacterium tuberculosis from the complete genome sequence.</title>
        <authorList>
            <person name="Cole S.T."/>
            <person name="Brosch R."/>
            <person name="Parkhill J."/>
            <person name="Garnier T."/>
            <person name="Churcher C.M."/>
            <person name="Harris D.E."/>
            <person name="Gordon S.V."/>
            <person name="Eiglmeier K."/>
            <person name="Gas S."/>
            <person name="Barry C.E. III"/>
            <person name="Tekaia F."/>
            <person name="Badcock K."/>
            <person name="Basham D."/>
            <person name="Brown D."/>
            <person name="Chillingworth T."/>
            <person name="Connor R."/>
            <person name="Davies R.M."/>
            <person name="Devlin K."/>
            <person name="Feltwell T."/>
            <person name="Gentles S."/>
            <person name="Hamlin N."/>
            <person name="Holroyd S."/>
            <person name="Hornsby T."/>
            <person name="Jagels K."/>
            <person name="Krogh A."/>
            <person name="McLean J."/>
            <person name="Moule S."/>
            <person name="Murphy L.D."/>
            <person name="Oliver S."/>
            <person name="Osborne J."/>
            <person name="Quail M.A."/>
            <person name="Rajandream M.A."/>
            <person name="Rogers J."/>
            <person name="Rutter S."/>
            <person name="Seeger K."/>
            <person name="Skelton S."/>
            <person name="Squares S."/>
            <person name="Squares R."/>
            <person name="Sulston J.E."/>
            <person name="Taylor K."/>
            <person name="Whitehead S."/>
            <person name="Barrell B.G."/>
        </authorList>
    </citation>
    <scope>NUCLEOTIDE SEQUENCE [LARGE SCALE GENOMIC DNA]</scope>
    <source>
        <strain>ATCC 25618 / H37Rv</strain>
    </source>
</reference>
<reference key="3">
    <citation type="journal article" date="2011" name="Mol. Cell. Proteomics">
        <title>Proteogenomic analysis of Mycobacterium tuberculosis by high resolution mass spectrometry.</title>
        <authorList>
            <person name="Kelkar D.S."/>
            <person name="Kumar D."/>
            <person name="Kumar P."/>
            <person name="Balakrishnan L."/>
            <person name="Muthusamy B."/>
            <person name="Yadav A.K."/>
            <person name="Shrivastava P."/>
            <person name="Marimuthu A."/>
            <person name="Anand S."/>
            <person name="Sundaram H."/>
            <person name="Kingsbury R."/>
            <person name="Harsha H.C."/>
            <person name="Nair B."/>
            <person name="Prasad T.S."/>
            <person name="Chauhan D.S."/>
            <person name="Katoch K."/>
            <person name="Katoch V.M."/>
            <person name="Kumar P."/>
            <person name="Chaerkady R."/>
            <person name="Ramachandran S."/>
            <person name="Dash D."/>
            <person name="Pandey A."/>
        </authorList>
    </citation>
    <scope>IDENTIFICATION BY MASS SPECTROMETRY [LARGE SCALE ANALYSIS]</scope>
    <source>
        <strain>ATCC 25618 / H37Rv</strain>
    </source>
</reference>
<reference key="4">
    <citation type="journal article" date="2012" name="J. Immunol.">
        <title>Recombinant MPT83 derived from Mycobacterium tuberculosis induces cytokine production and upregulates the function of mouse macrophages through TLR2.</title>
        <authorList>
            <person name="Chen S.T."/>
            <person name="Li J.Y."/>
            <person name="Zhang Y."/>
            <person name="Gao X."/>
            <person name="Cai H."/>
        </authorList>
    </citation>
    <scope>FUNCTION</scope>
    <scope>INTERACTION WITH HOST TLR2</scope>
    <source>
        <strain>ATCC 25618 / H37Rv</strain>
    </source>
</reference>
<reference key="5">
    <citation type="journal article" date="2012" name="PLoS ONE">
        <title>The secreted lipoprotein, MPT83, of Mycobacterium tuberculosis is recognized during human tuberculosis and stimulates protective immunity in mice.</title>
        <authorList>
            <person name="Kao F.F."/>
            <person name="Mahmuda S."/>
            <person name="Pinto R."/>
            <person name="Triccas J.A."/>
            <person name="West N.P."/>
            <person name="Britton W.J."/>
        </authorList>
    </citation>
    <scope>FUNCTION</scope>
    <scope>SUBCELLULAR LOCATION</scope>
    <scope>BIOTECHNOLOGY</scope>
    <source>
        <strain>ATCC 25618 / H37Rv</strain>
    </source>
</reference>
<dbReference type="EMBL" id="X94597">
    <property type="protein sequence ID" value="CAA64290.1"/>
    <property type="molecule type" value="Genomic_DNA"/>
</dbReference>
<dbReference type="EMBL" id="AL123456">
    <property type="protein sequence ID" value="CCP45675.1"/>
    <property type="molecule type" value="Genomic_DNA"/>
</dbReference>
<dbReference type="PIR" id="D70923">
    <property type="entry name" value="D70923"/>
</dbReference>
<dbReference type="RefSeq" id="NP_217389.1">
    <property type="nucleotide sequence ID" value="NC_000962.3"/>
</dbReference>
<dbReference type="RefSeq" id="WP_003414630.1">
    <property type="nucleotide sequence ID" value="NZ_NVQJ01000006.1"/>
</dbReference>
<dbReference type="SMR" id="P9WNF3"/>
<dbReference type="FunCoup" id="P9WNF3">
    <property type="interactions" value="1"/>
</dbReference>
<dbReference type="STRING" id="83332.Rv2873"/>
<dbReference type="GlyCosmos" id="P9WNF3">
    <property type="glycosylation" value="2 sites, No reported glycans"/>
</dbReference>
<dbReference type="PaxDb" id="83332-Rv2873"/>
<dbReference type="DNASU" id="887155"/>
<dbReference type="GeneID" id="887155"/>
<dbReference type="KEGG" id="mtu:Rv2873"/>
<dbReference type="KEGG" id="mtv:RVBD_2873"/>
<dbReference type="TubercuList" id="Rv2873"/>
<dbReference type="eggNOG" id="COG2335">
    <property type="taxonomic scope" value="Bacteria"/>
</dbReference>
<dbReference type="InParanoid" id="P9WNF3"/>
<dbReference type="OrthoDB" id="9800666at2"/>
<dbReference type="PhylomeDB" id="P9WNF3"/>
<dbReference type="Proteomes" id="UP000001584">
    <property type="component" value="Chromosome"/>
</dbReference>
<dbReference type="GO" id="GO:0031012">
    <property type="term" value="C:extracellular matrix"/>
    <property type="evidence" value="ECO:0000318"/>
    <property type="project" value="GO_Central"/>
</dbReference>
<dbReference type="GO" id="GO:0005576">
    <property type="term" value="C:extracellular region"/>
    <property type="evidence" value="ECO:0007005"/>
    <property type="project" value="MTBBASE"/>
</dbReference>
<dbReference type="GO" id="GO:0005615">
    <property type="term" value="C:extracellular space"/>
    <property type="evidence" value="ECO:0000318"/>
    <property type="project" value="GO_Central"/>
</dbReference>
<dbReference type="GO" id="GO:0005886">
    <property type="term" value="C:plasma membrane"/>
    <property type="evidence" value="ECO:0007005"/>
    <property type="project" value="MTBBASE"/>
</dbReference>
<dbReference type="GO" id="GO:0050839">
    <property type="term" value="F:cell adhesion molecule binding"/>
    <property type="evidence" value="ECO:0000318"/>
    <property type="project" value="GO_Central"/>
</dbReference>
<dbReference type="GO" id="GO:0007155">
    <property type="term" value="P:cell adhesion"/>
    <property type="evidence" value="ECO:0000318"/>
    <property type="project" value="GO_Central"/>
</dbReference>
<dbReference type="GO" id="GO:0030198">
    <property type="term" value="P:extracellular matrix organization"/>
    <property type="evidence" value="ECO:0000318"/>
    <property type="project" value="GO_Central"/>
</dbReference>
<dbReference type="FunFam" id="2.30.180.10:FF:000019">
    <property type="entry name" value="Cell surface lipoprotein"/>
    <property type="match status" value="1"/>
</dbReference>
<dbReference type="Gene3D" id="2.30.180.10">
    <property type="entry name" value="FAS1 domain"/>
    <property type="match status" value="1"/>
</dbReference>
<dbReference type="InterPro" id="IPR050904">
    <property type="entry name" value="Adhesion/Biosynth-related"/>
</dbReference>
<dbReference type="InterPro" id="IPR036378">
    <property type="entry name" value="FAS1_dom_sf"/>
</dbReference>
<dbReference type="InterPro" id="IPR000782">
    <property type="entry name" value="FAS1_domain"/>
</dbReference>
<dbReference type="PANTHER" id="PTHR10900:SF77">
    <property type="entry name" value="FI19380P1"/>
    <property type="match status" value="1"/>
</dbReference>
<dbReference type="PANTHER" id="PTHR10900">
    <property type="entry name" value="PERIOSTIN-RELATED"/>
    <property type="match status" value="1"/>
</dbReference>
<dbReference type="Pfam" id="PF02469">
    <property type="entry name" value="Fasciclin"/>
    <property type="match status" value="1"/>
</dbReference>
<dbReference type="SMART" id="SM00554">
    <property type="entry name" value="FAS1"/>
    <property type="match status" value="1"/>
</dbReference>
<dbReference type="SUPFAM" id="SSF82153">
    <property type="entry name" value="FAS1 domain"/>
    <property type="match status" value="1"/>
</dbReference>
<dbReference type="PROSITE" id="PS50213">
    <property type="entry name" value="FAS1"/>
    <property type="match status" value="1"/>
</dbReference>
<dbReference type="PROSITE" id="PS51257">
    <property type="entry name" value="PROKAR_LIPOPROTEIN"/>
    <property type="match status" value="1"/>
</dbReference>
<sequence length="220" mass="22070">MINVQAKPAAAASLAAIAIAFLAGCSSTKPVSQDTSPKPATSPAAPVTTAAMADPAADLIGRGCAQYAAQNPTGPGSVAGMAQDPVATAASNNPMLSTLTSALSGKLNPDVNLVDTLNGGEYTVFAPTNAAFDKLPAATIDQLKTDAKLLSSILTYHVIAGQASPSRIDGTHQTLQGADLTVIGARDDLMVNNAGLVCGGVHTANATVYMIDTVLMPPAQ</sequence>
<organism>
    <name type="scientific">Mycobacterium tuberculosis (strain ATCC 25618 / H37Rv)</name>
    <dbReference type="NCBI Taxonomy" id="83332"/>
    <lineage>
        <taxon>Bacteria</taxon>
        <taxon>Bacillati</taxon>
        <taxon>Actinomycetota</taxon>
        <taxon>Actinomycetes</taxon>
        <taxon>Mycobacteriales</taxon>
        <taxon>Mycobacteriaceae</taxon>
        <taxon>Mycobacterium</taxon>
        <taxon>Mycobacterium tuberculosis complex</taxon>
    </lineage>
</organism>
<protein>
    <recommendedName>
        <fullName>Cell surface glycolipoprotein MPT83</fullName>
    </recommendedName>
    <alternativeName>
        <fullName>Lipoprotein p23</fullName>
    </alternativeName>
</protein>
<feature type="signal peptide" evidence="3">
    <location>
        <begin position="1"/>
        <end position="24"/>
    </location>
</feature>
<feature type="chain" id="PRO_0000008788" description="Cell surface glycolipoprotein MPT83">
    <location>
        <begin position="25"/>
        <end position="220"/>
    </location>
</feature>
<feature type="domain" description="FAS1" evidence="2">
    <location>
        <begin position="83"/>
        <end position="215"/>
    </location>
</feature>
<feature type="lipid moiety-binding region" description="N-palmitoyl cysteine" evidence="3">
    <location>
        <position position="25"/>
    </location>
</feature>
<feature type="lipid moiety-binding region" description="S-diacylglycerol cysteine" evidence="3">
    <location>
        <position position="25"/>
    </location>
</feature>
<feature type="glycosylation site" description="O-linked (Man...) threonine" evidence="1">
    <location>
        <position position="48"/>
    </location>
</feature>
<feature type="glycosylation site" description="O-linked (Man...) threonine" evidence="1">
    <location>
        <position position="49"/>
    </location>
</feature>
<evidence type="ECO:0000250" key="1">
    <source>
        <dbReference type="UniProtKB" id="P0CAX7"/>
    </source>
</evidence>
<evidence type="ECO:0000255" key="2">
    <source>
        <dbReference type="PROSITE-ProRule" id="PRU00082"/>
    </source>
</evidence>
<evidence type="ECO:0000255" key="3">
    <source>
        <dbReference type="PROSITE-ProRule" id="PRU00303"/>
    </source>
</evidence>
<evidence type="ECO:0000269" key="4">
    <source>
    </source>
</evidence>
<evidence type="ECO:0000269" key="5">
    <source>
    </source>
</evidence>
<evidence type="ECO:0000269" key="6">
    <source>
    </source>
</evidence>
<evidence type="ECO:0000305" key="7">
    <source>
    </source>
</evidence>
<evidence type="ECO:0000305" key="8">
    <source>
    </source>
</evidence>